<evidence type="ECO:0000250" key="1">
    <source>
        <dbReference type="UniProtKB" id="Q00017"/>
    </source>
</evidence>
<evidence type="ECO:0000255" key="2"/>
<evidence type="ECO:0000255" key="3">
    <source>
        <dbReference type="PROSITE-ProRule" id="PRU00498"/>
    </source>
</evidence>
<evidence type="ECO:0000269" key="4">
    <source>
    </source>
</evidence>
<evidence type="ECO:0000303" key="5">
    <source>
    </source>
</evidence>
<evidence type="ECO:0000305" key="6"/>
<evidence type="ECO:0000312" key="7">
    <source>
        <dbReference type="EMBL" id="AAW88320.1"/>
    </source>
</evidence>
<gene>
    <name evidence="5" type="primary">AAE</name>
</gene>
<dbReference type="EC" id="3.1.1.80" evidence="4"/>
<dbReference type="EMBL" id="AY762990">
    <property type="protein sequence ID" value="AAW88320.1"/>
    <property type="molecule type" value="mRNA"/>
</dbReference>
<dbReference type="SMR" id="Q3MKY2"/>
<dbReference type="GlyCosmos" id="Q3MKY2">
    <property type="glycosylation" value="5 sites, No reported glycans"/>
</dbReference>
<dbReference type="KEGG" id="ag:AAW88320"/>
<dbReference type="BRENDA" id="3.1.1.80">
    <property type="organism ID" value="5309"/>
</dbReference>
<dbReference type="UniPathway" id="UPA00310"/>
<dbReference type="GO" id="GO:0033879">
    <property type="term" value="F:acetylajmaline esterase activity"/>
    <property type="evidence" value="ECO:0007669"/>
    <property type="project" value="UniProtKB-EC"/>
</dbReference>
<dbReference type="GO" id="GO:0009820">
    <property type="term" value="P:alkaloid metabolic process"/>
    <property type="evidence" value="ECO:0007669"/>
    <property type="project" value="UniProtKB-KW"/>
</dbReference>
<dbReference type="CDD" id="cd01837">
    <property type="entry name" value="SGNH_plant_lipase_like"/>
    <property type="match status" value="1"/>
</dbReference>
<dbReference type="Gene3D" id="3.40.50.1110">
    <property type="entry name" value="SGNH hydrolase"/>
    <property type="match status" value="1"/>
</dbReference>
<dbReference type="InterPro" id="IPR001087">
    <property type="entry name" value="GDSL"/>
</dbReference>
<dbReference type="InterPro" id="IPR036514">
    <property type="entry name" value="SGNH_hydro_sf"/>
</dbReference>
<dbReference type="InterPro" id="IPR035669">
    <property type="entry name" value="SGNH_plant_lipase-like"/>
</dbReference>
<dbReference type="PANTHER" id="PTHR22835:SF677">
    <property type="entry name" value="ACETYLAJMALAN ESTERASE-LIKE"/>
    <property type="match status" value="1"/>
</dbReference>
<dbReference type="PANTHER" id="PTHR22835">
    <property type="entry name" value="ZINC FINGER FYVE DOMAIN CONTAINING PROTEIN"/>
    <property type="match status" value="1"/>
</dbReference>
<dbReference type="Pfam" id="PF00657">
    <property type="entry name" value="Lipase_GDSL"/>
    <property type="match status" value="1"/>
</dbReference>
<dbReference type="SUPFAM" id="SSF52266">
    <property type="entry name" value="SGNH hydrolase"/>
    <property type="match status" value="1"/>
</dbReference>
<proteinExistence type="evidence at protein level"/>
<feature type="signal peptide" evidence="2">
    <location>
        <begin position="1"/>
        <end position="22"/>
    </location>
</feature>
<feature type="chain" id="PRO_0000402567" description="Acetylajmalan esterase" evidence="2">
    <location>
        <begin position="23"/>
        <end position="387"/>
    </location>
</feature>
<feature type="active site" description="Nucleophile" evidence="1">
    <location>
        <position position="36"/>
    </location>
</feature>
<feature type="active site" evidence="1">
    <location>
        <position position="337"/>
    </location>
</feature>
<feature type="active site" evidence="1">
    <location>
        <position position="340"/>
    </location>
</feature>
<feature type="glycosylation site" description="N-linked (GlcNAc...) asparagine" evidence="3">
    <location>
        <position position="98"/>
    </location>
</feature>
<feature type="glycosylation site" description="N-linked (GlcNAc...) asparagine" evidence="3">
    <location>
        <position position="180"/>
    </location>
</feature>
<feature type="glycosylation site" description="N-linked (GlcNAc...) asparagine" evidence="3">
    <location>
        <position position="199"/>
    </location>
</feature>
<feature type="glycosylation site" description="N-linked (GlcNAc...) asparagine" evidence="3">
    <location>
        <position position="249"/>
    </location>
</feature>
<feature type="glycosylation site" description="N-linked (GlcNAc...) asparagine" evidence="3">
    <location>
        <position position="296"/>
    </location>
</feature>
<accession>Q3MKY2</accession>
<organism>
    <name type="scientific">Rauvolfia serpentina</name>
    <name type="common">Serpentine wood</name>
    <name type="synonym">Ophioxylon serpentinum</name>
    <dbReference type="NCBI Taxonomy" id="4060"/>
    <lineage>
        <taxon>Eukaryota</taxon>
        <taxon>Viridiplantae</taxon>
        <taxon>Streptophyta</taxon>
        <taxon>Embryophyta</taxon>
        <taxon>Tracheophyta</taxon>
        <taxon>Spermatophyta</taxon>
        <taxon>Magnoliopsida</taxon>
        <taxon>eudicotyledons</taxon>
        <taxon>Gunneridae</taxon>
        <taxon>Pentapetalae</taxon>
        <taxon>asterids</taxon>
        <taxon>lamiids</taxon>
        <taxon>Gentianales</taxon>
        <taxon>Apocynaceae</taxon>
        <taxon>Rauvolfioideae</taxon>
        <taxon>Vinceae</taxon>
        <taxon>Rauvolfiinae</taxon>
        <taxon>Rauvolfia</taxon>
    </lineage>
</organism>
<protein>
    <recommendedName>
        <fullName evidence="5">Acetylajmalan esterase</fullName>
        <ecNumber evidence="4">3.1.1.80</ecNumber>
    </recommendedName>
</protein>
<comment type="function">
    <text evidence="4">Acetylesterase involved in the biosynthesis of ajmaline-type monoterpenoid indole alkaloids (MIAs) natural products, important plant-derived pharmaceuticals used in the therapy of heart disorders (PubMed:16133216). Deacetylates 17-O-acetylajmaline and 17-O-acetylnorajmaline to produce ajmaline and norajmaline, but is inactive toward other acetylated alkaloids (PubMed:16133216).</text>
</comment>
<comment type="catalytic activity">
    <reaction evidence="4">
        <text>17-O-acetylajmaline + H2O = ajmaline + acetate + H(+)</text>
        <dbReference type="Rhea" id="RHEA:22124"/>
        <dbReference type="ChEBI" id="CHEBI:15377"/>
        <dbReference type="ChEBI" id="CHEBI:15378"/>
        <dbReference type="ChEBI" id="CHEBI:30089"/>
        <dbReference type="ChEBI" id="CHEBI:58567"/>
        <dbReference type="ChEBI" id="CHEBI:58679"/>
        <dbReference type="EC" id="3.1.1.80"/>
    </reaction>
    <physiologicalReaction direction="left-to-right" evidence="4">
        <dbReference type="Rhea" id="RHEA:22125"/>
    </physiologicalReaction>
</comment>
<comment type="catalytic activity">
    <reaction evidence="4">
        <text>17-O-acetylnorajmaline + H2O = norajmaline + acetate + H(+)</text>
        <dbReference type="Rhea" id="RHEA:23796"/>
        <dbReference type="ChEBI" id="CHEBI:15377"/>
        <dbReference type="ChEBI" id="CHEBI:15378"/>
        <dbReference type="ChEBI" id="CHEBI:30089"/>
        <dbReference type="ChEBI" id="CHEBI:77618"/>
        <dbReference type="ChEBI" id="CHEBI:77725"/>
        <dbReference type="EC" id="3.1.1.80"/>
    </reaction>
    <physiologicalReaction direction="left-to-right" evidence="4">
        <dbReference type="Rhea" id="RHEA:23797"/>
    </physiologicalReaction>
</comment>
<comment type="biophysicochemical properties">
    <kinetics>
        <KM evidence="4">0.7 mM for 17-O-acetylnorajmaline</KM>
        <KM evidence="4">0.12 mM for 17-O-acetylajmaline</KM>
    </kinetics>
    <phDependence>
        <text evidence="4">Optimum pH is 8.0. Half maximum activity is seen at pH 6.5 and 9.8.</text>
    </phDependence>
    <temperatureDependence>
        <text evidence="4">Optimum temperature is 53 degrees Celsius.</text>
    </temperatureDependence>
</comment>
<comment type="pathway">
    <text evidence="4">Alkaloid biosynthesis; ajmaline biosynthesis.</text>
</comment>
<comment type="similarity">
    <text evidence="2">Belongs to the 'GDSL' lipolytic enzyme family.</text>
</comment>
<keyword id="KW-0017">Alkaloid metabolism</keyword>
<keyword id="KW-0325">Glycoprotein</keyword>
<keyword id="KW-0378">Hydrolase</keyword>
<keyword id="KW-0732">Signal</keyword>
<name>AAE_RAUSE</name>
<sequence>MGFARLLHLVFSLLVFAGITNGLICPFDSIYQLGDSFSDTGNLIRLPPDGPTFTAAHFPYGETFPGTPTGRCSDGRLIIDFIATALNLPLLNPYLQQNVSFRHGVNFAVAGATALDRSFLAARGVQVSDIHSHLSAQLNWFRTYLGSICSTPKECSNKLKNALFILGNIGNNDVNYAFPNRTIEEIRAYVPFITEAVANATREIIRLGGSRVIVPGIFPIGCVARNLNFLNFFPDGDKDDLGCLSSLNNLSIYFNSLFQRALASLSIEFPQAVIIYADYYNAWRFLFRNGPALGSNSTSLLKCCCGIGGPYNYDPDRECGSRGVPVCPNPTQYIQWDGTHFTQAAYRRVAEYVIPGIIKALKCSYSNIQPFLREGEGRQALRLNERE</sequence>
<reference evidence="6 7" key="1">
    <citation type="journal article" date="2005" name="Planta">
        <title>Functional expression of an ajmaline pathway-specific esterase from Rauvolfia in a novel plant-virus expression system.</title>
        <authorList>
            <person name="Ruppert M."/>
            <person name="Woll J."/>
            <person name="Giritch A."/>
            <person name="Genady E."/>
            <person name="Ma X."/>
            <person name="Stockigt J."/>
        </authorList>
    </citation>
    <scope>NUCLEOTIDE SEQUENCE [MRNA]</scope>
    <scope>FUNCTION</scope>
    <scope>CATALYTIC ACTIVITY</scope>
    <scope>BIOPHYSICOCHEMICAL PROPERTIES</scope>
    <scope>PATHWAY</scope>
</reference>